<feature type="chain" id="PRO_0000079639" description="30 kDa cell wall protein">
    <location>
        <begin position="1"/>
        <end position="14" status="greater than"/>
    </location>
</feature>
<feature type="non-terminal residue" evidence="2">
    <location>
        <position position="14"/>
    </location>
</feature>
<evidence type="ECO:0000269" key="1">
    <source>
    </source>
</evidence>
<evidence type="ECO:0000303" key="2">
    <source>
    </source>
</evidence>
<evidence type="ECO:0000305" key="3"/>
<name>CWP06_DAUCA</name>
<keyword id="KW-0134">Cell wall</keyword>
<keyword id="KW-0903">Direct protein sequencing</keyword>
<keyword id="KW-0964">Secreted</keyword>
<dbReference type="GO" id="GO:0005576">
    <property type="term" value="C:extracellular region"/>
    <property type="evidence" value="ECO:0007669"/>
    <property type="project" value="UniProtKB-KW"/>
</dbReference>
<accession>P80756</accession>
<sequence>SEVGALVFQPKTRF</sequence>
<protein>
    <recommendedName>
        <fullName>30 kDa cell wall protein</fullName>
    </recommendedName>
</protein>
<proteinExistence type="evidence at protein level"/>
<reference evidence="3" key="1">
    <citation type="journal article" date="1997" name="J. Biol. Chem.">
        <title>Differential extraction and protein sequencing reveals major differences in patterns of primary cell wall proteins from plants.</title>
        <authorList>
            <person name="Robertson D."/>
            <person name="Mitchell G.P."/>
            <person name="Gilroy J.S."/>
            <person name="Gerrish C."/>
            <person name="Bolwell G.P."/>
            <person name="Slabas A.R."/>
        </authorList>
    </citation>
    <scope>PROTEIN SEQUENCE</scope>
    <scope>SUBCELLULAR LOCATION</scope>
</reference>
<organism>
    <name type="scientific">Daucus carota</name>
    <name type="common">Wild carrot</name>
    <dbReference type="NCBI Taxonomy" id="4039"/>
    <lineage>
        <taxon>Eukaryota</taxon>
        <taxon>Viridiplantae</taxon>
        <taxon>Streptophyta</taxon>
        <taxon>Embryophyta</taxon>
        <taxon>Tracheophyta</taxon>
        <taxon>Spermatophyta</taxon>
        <taxon>Magnoliopsida</taxon>
        <taxon>eudicotyledons</taxon>
        <taxon>Gunneridae</taxon>
        <taxon>Pentapetalae</taxon>
        <taxon>asterids</taxon>
        <taxon>campanulids</taxon>
        <taxon>Apiales</taxon>
        <taxon>Apiaceae</taxon>
        <taxon>Apioideae</taxon>
        <taxon>Scandiceae</taxon>
        <taxon>Daucinae</taxon>
        <taxon>Daucus</taxon>
        <taxon>Daucus sect. Daucus</taxon>
    </lineage>
</organism>
<comment type="subcellular location">
    <subcellularLocation>
        <location evidence="1">Secreted</location>
        <location evidence="1">Cell wall</location>
    </subcellularLocation>
</comment>